<name>EFGM_COCIM</name>
<evidence type="ECO:0000255" key="1">
    <source>
        <dbReference type="HAMAP-Rule" id="MF_03061"/>
    </source>
</evidence>
<evidence type="ECO:0000305" key="2"/>
<comment type="function">
    <text evidence="1">Mitochondrial GTPase that catalyzes the GTP-dependent ribosomal translocation step during translation elongation. During this step, the ribosome changes from the pre-translocational (PRE) to the post-translocational (POST) state as the newly formed A-site-bound peptidyl-tRNA and P-site-bound deacylated tRNA move to the P and E sites, respectively. Catalyzes the coordinated movement of the two tRNA molecules, the mRNA and conformational changes in the ribosome.</text>
</comment>
<comment type="pathway">
    <text evidence="1">Protein biosynthesis; polypeptide chain elongation.</text>
</comment>
<comment type="subcellular location">
    <subcellularLocation>
        <location evidence="1">Mitochondrion</location>
    </subcellularLocation>
</comment>
<comment type="similarity">
    <text evidence="2">Belongs to the TRAFAC class translation factor GTPase superfamily. Classic translation factor GTPase family. EF-G/EF-2 subfamily.</text>
</comment>
<reference key="1">
    <citation type="journal article" date="2009" name="Genome Res.">
        <title>Comparative genomic analyses of the human fungal pathogens Coccidioides and their relatives.</title>
        <authorList>
            <person name="Sharpton T.J."/>
            <person name="Stajich J.E."/>
            <person name="Rounsley S.D."/>
            <person name="Gardner M.J."/>
            <person name="Wortman J.R."/>
            <person name="Jordar V.S."/>
            <person name="Maiti R."/>
            <person name="Kodira C.D."/>
            <person name="Neafsey D.E."/>
            <person name="Zeng Q."/>
            <person name="Hung C.-Y."/>
            <person name="McMahan C."/>
            <person name="Muszewska A."/>
            <person name="Grynberg M."/>
            <person name="Mandel M.A."/>
            <person name="Kellner E.M."/>
            <person name="Barker B.M."/>
            <person name="Galgiani J.N."/>
            <person name="Orbach M.J."/>
            <person name="Kirkland T.N."/>
            <person name="Cole G.T."/>
            <person name="Henn M.R."/>
            <person name="Birren B.W."/>
            <person name="Taylor J.W."/>
        </authorList>
    </citation>
    <scope>NUCLEOTIDE SEQUENCE [LARGE SCALE GENOMIC DNA]</scope>
    <source>
        <strain>RS</strain>
    </source>
</reference>
<reference key="2">
    <citation type="journal article" date="2010" name="Genome Res.">
        <title>Population genomic sequencing of Coccidioides fungi reveals recent hybridization and transposon control.</title>
        <authorList>
            <person name="Neafsey D.E."/>
            <person name="Barker B.M."/>
            <person name="Sharpton T.J."/>
            <person name="Stajich J.E."/>
            <person name="Park D.J."/>
            <person name="Whiston E."/>
            <person name="Hung C.-Y."/>
            <person name="McMahan C."/>
            <person name="White J."/>
            <person name="Sykes S."/>
            <person name="Heiman D."/>
            <person name="Young S."/>
            <person name="Zeng Q."/>
            <person name="Abouelleil A."/>
            <person name="Aftuck L."/>
            <person name="Bessette D."/>
            <person name="Brown A."/>
            <person name="FitzGerald M."/>
            <person name="Lui A."/>
            <person name="Macdonald J.P."/>
            <person name="Priest M."/>
            <person name="Orbach M.J."/>
            <person name="Galgiani J.N."/>
            <person name="Kirkland T.N."/>
            <person name="Cole G.T."/>
            <person name="Birren B.W."/>
            <person name="Henn M.R."/>
            <person name="Taylor J.W."/>
            <person name="Rounsley S.D."/>
        </authorList>
    </citation>
    <scope>GENOME REANNOTATION</scope>
    <source>
        <strain>RS</strain>
    </source>
</reference>
<dbReference type="EMBL" id="GG704913">
    <property type="protein sequence ID" value="EAS30047.1"/>
    <property type="molecule type" value="Genomic_DNA"/>
</dbReference>
<dbReference type="RefSeq" id="XP_001241630.1">
    <property type="nucleotide sequence ID" value="XM_001241629.2"/>
</dbReference>
<dbReference type="SMR" id="Q1DLM0"/>
<dbReference type="FunCoup" id="Q1DLM0">
    <property type="interactions" value="647"/>
</dbReference>
<dbReference type="STRING" id="246410.Q1DLM0"/>
<dbReference type="GeneID" id="4560612"/>
<dbReference type="KEGG" id="cim:CIMG_08793"/>
<dbReference type="VEuPathDB" id="FungiDB:CIMG_08793"/>
<dbReference type="InParanoid" id="Q1DLM0"/>
<dbReference type="OMA" id="GQFAKVQ"/>
<dbReference type="OrthoDB" id="198619at2759"/>
<dbReference type="UniPathway" id="UPA00345"/>
<dbReference type="Proteomes" id="UP000001261">
    <property type="component" value="Unassembled WGS sequence"/>
</dbReference>
<dbReference type="GO" id="GO:0005739">
    <property type="term" value="C:mitochondrion"/>
    <property type="evidence" value="ECO:0007669"/>
    <property type="project" value="UniProtKB-SubCell"/>
</dbReference>
<dbReference type="GO" id="GO:0005525">
    <property type="term" value="F:GTP binding"/>
    <property type="evidence" value="ECO:0007669"/>
    <property type="project" value="UniProtKB-UniRule"/>
</dbReference>
<dbReference type="GO" id="GO:0003924">
    <property type="term" value="F:GTPase activity"/>
    <property type="evidence" value="ECO:0007669"/>
    <property type="project" value="UniProtKB-UniRule"/>
</dbReference>
<dbReference type="GO" id="GO:0003746">
    <property type="term" value="F:translation elongation factor activity"/>
    <property type="evidence" value="ECO:0007669"/>
    <property type="project" value="UniProtKB-UniRule"/>
</dbReference>
<dbReference type="GO" id="GO:0070125">
    <property type="term" value="P:mitochondrial translational elongation"/>
    <property type="evidence" value="ECO:0007669"/>
    <property type="project" value="UniProtKB-UniRule"/>
</dbReference>
<dbReference type="CDD" id="cd01886">
    <property type="entry name" value="EF-G"/>
    <property type="match status" value="1"/>
</dbReference>
<dbReference type="CDD" id="cd16262">
    <property type="entry name" value="EFG_III"/>
    <property type="match status" value="1"/>
</dbReference>
<dbReference type="CDD" id="cd01434">
    <property type="entry name" value="EFG_mtEFG1_IV"/>
    <property type="match status" value="1"/>
</dbReference>
<dbReference type="CDD" id="cd04091">
    <property type="entry name" value="mtEFG1_II_like"/>
    <property type="match status" value="1"/>
</dbReference>
<dbReference type="FunFam" id="3.30.70.870:FF:000001">
    <property type="entry name" value="Elongation factor G"/>
    <property type="match status" value="1"/>
</dbReference>
<dbReference type="FunFam" id="2.40.30.10:FF:000022">
    <property type="entry name" value="Elongation factor G, mitochondrial"/>
    <property type="match status" value="1"/>
</dbReference>
<dbReference type="FunFam" id="3.30.70.240:FF:000015">
    <property type="entry name" value="Elongation factor G, mitochondrial"/>
    <property type="match status" value="1"/>
</dbReference>
<dbReference type="FunFam" id="3.40.50.300:FF:000558">
    <property type="entry name" value="Elongation factor G, mitochondrial"/>
    <property type="match status" value="1"/>
</dbReference>
<dbReference type="Gene3D" id="3.30.230.10">
    <property type="match status" value="1"/>
</dbReference>
<dbReference type="Gene3D" id="3.30.70.240">
    <property type="match status" value="1"/>
</dbReference>
<dbReference type="Gene3D" id="3.30.70.870">
    <property type="entry name" value="Elongation Factor G (Translational Gtpase), domain 3"/>
    <property type="match status" value="1"/>
</dbReference>
<dbReference type="Gene3D" id="3.40.50.300">
    <property type="entry name" value="P-loop containing nucleotide triphosphate hydrolases"/>
    <property type="match status" value="1"/>
</dbReference>
<dbReference type="Gene3D" id="2.40.30.10">
    <property type="entry name" value="Translation factors"/>
    <property type="match status" value="1"/>
</dbReference>
<dbReference type="HAMAP" id="MF_00054_B">
    <property type="entry name" value="EF_G_EF_2_B"/>
    <property type="match status" value="1"/>
</dbReference>
<dbReference type="InterPro" id="IPR041095">
    <property type="entry name" value="EFG_II"/>
</dbReference>
<dbReference type="InterPro" id="IPR009022">
    <property type="entry name" value="EFG_III"/>
</dbReference>
<dbReference type="InterPro" id="IPR035647">
    <property type="entry name" value="EFG_III/V"/>
</dbReference>
<dbReference type="InterPro" id="IPR047872">
    <property type="entry name" value="EFG_IV"/>
</dbReference>
<dbReference type="InterPro" id="IPR000640">
    <property type="entry name" value="EFG_V-like"/>
</dbReference>
<dbReference type="InterPro" id="IPR004161">
    <property type="entry name" value="EFTu-like_2"/>
</dbReference>
<dbReference type="InterPro" id="IPR031157">
    <property type="entry name" value="G_TR_CS"/>
</dbReference>
<dbReference type="InterPro" id="IPR027417">
    <property type="entry name" value="P-loop_NTPase"/>
</dbReference>
<dbReference type="InterPro" id="IPR020568">
    <property type="entry name" value="Ribosomal_Su5_D2-typ_SF"/>
</dbReference>
<dbReference type="InterPro" id="IPR014721">
    <property type="entry name" value="Ribsml_uS5_D2-typ_fold_subgr"/>
</dbReference>
<dbReference type="InterPro" id="IPR005225">
    <property type="entry name" value="Small_GTP-bd"/>
</dbReference>
<dbReference type="InterPro" id="IPR000795">
    <property type="entry name" value="T_Tr_GTP-bd_dom"/>
</dbReference>
<dbReference type="InterPro" id="IPR009000">
    <property type="entry name" value="Transl_B-barrel_sf"/>
</dbReference>
<dbReference type="InterPro" id="IPR004540">
    <property type="entry name" value="Transl_elong_EFG/EF2"/>
</dbReference>
<dbReference type="InterPro" id="IPR005517">
    <property type="entry name" value="Transl_elong_EFG/EF2_IV"/>
</dbReference>
<dbReference type="NCBIfam" id="TIGR00484">
    <property type="entry name" value="EF-G"/>
    <property type="match status" value="1"/>
</dbReference>
<dbReference type="NCBIfam" id="NF009381">
    <property type="entry name" value="PRK12740.1-5"/>
    <property type="match status" value="1"/>
</dbReference>
<dbReference type="NCBIfam" id="TIGR00231">
    <property type="entry name" value="small_GTP"/>
    <property type="match status" value="1"/>
</dbReference>
<dbReference type="PANTHER" id="PTHR43636">
    <property type="entry name" value="ELONGATION FACTOR G, MITOCHONDRIAL"/>
    <property type="match status" value="1"/>
</dbReference>
<dbReference type="PANTHER" id="PTHR43636:SF2">
    <property type="entry name" value="ELONGATION FACTOR G, MITOCHONDRIAL"/>
    <property type="match status" value="1"/>
</dbReference>
<dbReference type="Pfam" id="PF00679">
    <property type="entry name" value="EFG_C"/>
    <property type="match status" value="1"/>
</dbReference>
<dbReference type="Pfam" id="PF14492">
    <property type="entry name" value="EFG_III"/>
    <property type="match status" value="1"/>
</dbReference>
<dbReference type="Pfam" id="PF03764">
    <property type="entry name" value="EFG_IV"/>
    <property type="match status" value="1"/>
</dbReference>
<dbReference type="Pfam" id="PF00009">
    <property type="entry name" value="GTP_EFTU"/>
    <property type="match status" value="1"/>
</dbReference>
<dbReference type="Pfam" id="PF03144">
    <property type="entry name" value="GTP_EFTU_D2"/>
    <property type="match status" value="1"/>
</dbReference>
<dbReference type="PRINTS" id="PR00315">
    <property type="entry name" value="ELONGATNFCT"/>
</dbReference>
<dbReference type="SMART" id="SM00838">
    <property type="entry name" value="EFG_C"/>
    <property type="match status" value="1"/>
</dbReference>
<dbReference type="SMART" id="SM00889">
    <property type="entry name" value="EFG_IV"/>
    <property type="match status" value="1"/>
</dbReference>
<dbReference type="SUPFAM" id="SSF54980">
    <property type="entry name" value="EF-G C-terminal domain-like"/>
    <property type="match status" value="2"/>
</dbReference>
<dbReference type="SUPFAM" id="SSF52540">
    <property type="entry name" value="P-loop containing nucleoside triphosphate hydrolases"/>
    <property type="match status" value="1"/>
</dbReference>
<dbReference type="SUPFAM" id="SSF54211">
    <property type="entry name" value="Ribosomal protein S5 domain 2-like"/>
    <property type="match status" value="1"/>
</dbReference>
<dbReference type="SUPFAM" id="SSF50447">
    <property type="entry name" value="Translation proteins"/>
    <property type="match status" value="1"/>
</dbReference>
<dbReference type="PROSITE" id="PS00301">
    <property type="entry name" value="G_TR_1"/>
    <property type="match status" value="1"/>
</dbReference>
<dbReference type="PROSITE" id="PS51722">
    <property type="entry name" value="G_TR_2"/>
    <property type="match status" value="1"/>
</dbReference>
<keyword id="KW-0251">Elongation factor</keyword>
<keyword id="KW-0342">GTP-binding</keyword>
<keyword id="KW-0496">Mitochondrion</keyword>
<keyword id="KW-0547">Nucleotide-binding</keyword>
<keyword id="KW-0648">Protein biosynthesis</keyword>
<keyword id="KW-1185">Reference proteome</keyword>
<keyword id="KW-0809">Transit peptide</keyword>
<gene>
    <name evidence="1" type="primary">MEF1</name>
    <name type="ORF">CIMG_08793</name>
</gene>
<accession>Q1DLM0</accession>
<accession>A0A0D6K9N5</accession>
<accession>J3K1L7</accession>
<proteinExistence type="inferred from homology"/>
<feature type="transit peptide" description="Mitochondrion" evidence="1">
    <location>
        <begin position="1"/>
        <end position="34"/>
    </location>
</feature>
<feature type="chain" id="PRO_0000385568" description="Elongation factor G, mitochondrial">
    <location>
        <begin position="35"/>
        <end position="800"/>
    </location>
</feature>
<feature type="domain" description="tr-type G">
    <location>
        <begin position="99"/>
        <end position="385"/>
    </location>
</feature>
<feature type="binding site" evidence="1">
    <location>
        <begin position="108"/>
        <end position="115"/>
    </location>
    <ligand>
        <name>GTP</name>
        <dbReference type="ChEBI" id="CHEBI:37565"/>
    </ligand>
</feature>
<feature type="binding site" evidence="1">
    <location>
        <begin position="183"/>
        <end position="187"/>
    </location>
    <ligand>
        <name>GTP</name>
        <dbReference type="ChEBI" id="CHEBI:37565"/>
    </ligand>
</feature>
<feature type="binding site" evidence="1">
    <location>
        <begin position="237"/>
        <end position="240"/>
    </location>
    <ligand>
        <name>GTP</name>
        <dbReference type="ChEBI" id="CHEBI:37565"/>
    </ligand>
</feature>
<organism>
    <name type="scientific">Coccidioides immitis (strain RS)</name>
    <name type="common">Valley fever fungus</name>
    <dbReference type="NCBI Taxonomy" id="246410"/>
    <lineage>
        <taxon>Eukaryota</taxon>
        <taxon>Fungi</taxon>
        <taxon>Dikarya</taxon>
        <taxon>Ascomycota</taxon>
        <taxon>Pezizomycotina</taxon>
        <taxon>Eurotiomycetes</taxon>
        <taxon>Eurotiomycetidae</taxon>
        <taxon>Onygenales</taxon>
        <taxon>Onygenaceae</taxon>
        <taxon>Coccidioides</taxon>
    </lineage>
</organism>
<sequence>MSVHTVMRTQVRSLAGMPKAAMRPLGNSFCARRYLSAAPLRSIPAAPTRLPLNRRWEPKRHSSSATAAAVLEQAAAQPETLSQDAIIESMDPAEAARISKVRNIGIAAHIDSGKTTSTERVLFYTGRIQAIHEVRGRDSVGAKMDSMDLEREKGITIQSAATFCDWVKKENGKDEKYHINLIDTPGHIDFTIEVERALRVLDGAVLILCAVSGVQSQTITVDRQMRRYNVPRISFINKMDRMGSNPFRAIEQINQKLKMHAAAVQVPIGLEDEFKGVVDIIRMKAIYNEGPRGEMVVEKDEIPADVRPVAEERRRMLIETLADVDDDIAELFLEEKEPTVEQLKAAIRRATIARTFTPVFMGSALADKAVQPMLDGICDYLPNPAEIENLALDQKRNEASVKLVPYNSLPFVGLAFKLEESNFGQLTYIRVYQGTLRKGTNVFNARNNKRIKVPRIVRMHSNEMEEVSEIGAGEICAVFGVDCASGDTFTDGQLNYSMSSMFVPEPVISLSIKPKNSKDLANFSKAINRFQREDPTFRVHFDTESEETIISGMGELHLDIYVERMRREYRVDCETGKPQVAYRETIGKRVEFDHLLKKQTGGPGEYARVAGWMEPTGNLDGNNFEEQITGGSISEKFLFACEKGFGLACDKGPLIGHKVLGTRMVINDGATHMTDSSEMSFKNATQQAFRKAFMDSQPHILEPLMKTVITAPSEFQGDVIALLNKRNAIINDTETGVDEFTVYADCSLNGMFGFSTHLRAATQGKGEYTMEFSHYEKAPGHLQKELIAEYEKAQAARHKK</sequence>
<protein>
    <recommendedName>
        <fullName evidence="1">Elongation factor G, mitochondrial</fullName>
        <shortName evidence="1">EF-Gmt</shortName>
    </recommendedName>
    <alternativeName>
        <fullName evidence="1">Elongation factor G 1, mitochondrial</fullName>
        <shortName evidence="1">mEF-G 1</shortName>
    </alternativeName>
    <alternativeName>
        <fullName evidence="1">Elongation factor G1</fullName>
    </alternativeName>
</protein>